<dbReference type="EMBL" id="CP000305">
    <property type="protein sequence ID" value="ABG19643.1"/>
    <property type="molecule type" value="Genomic_DNA"/>
</dbReference>
<dbReference type="EMBL" id="ACNQ01000017">
    <property type="protein sequence ID" value="EEO75831.1"/>
    <property type="molecule type" value="Genomic_DNA"/>
</dbReference>
<dbReference type="RefSeq" id="WP_002209131.1">
    <property type="nucleotide sequence ID" value="NZ_ACNQ01000017.1"/>
</dbReference>
<dbReference type="SMR" id="Q1CED7"/>
<dbReference type="GeneID" id="57974254"/>
<dbReference type="KEGG" id="ypn:YPN_3316"/>
<dbReference type="HOGENOM" id="CLU_074944_0_0_6"/>
<dbReference type="UniPathway" id="UPA00345"/>
<dbReference type="Proteomes" id="UP000008936">
    <property type="component" value="Chromosome"/>
</dbReference>
<dbReference type="GO" id="GO:0005737">
    <property type="term" value="C:cytoplasm"/>
    <property type="evidence" value="ECO:0007669"/>
    <property type="project" value="UniProtKB-SubCell"/>
</dbReference>
<dbReference type="GO" id="GO:0003746">
    <property type="term" value="F:translation elongation factor activity"/>
    <property type="evidence" value="ECO:0007669"/>
    <property type="project" value="UniProtKB-UniRule"/>
</dbReference>
<dbReference type="GO" id="GO:0043043">
    <property type="term" value="P:peptide biosynthetic process"/>
    <property type="evidence" value="ECO:0007669"/>
    <property type="project" value="InterPro"/>
</dbReference>
<dbReference type="CDD" id="cd04470">
    <property type="entry name" value="S1_EF-P_repeat_1"/>
    <property type="match status" value="1"/>
</dbReference>
<dbReference type="CDD" id="cd05794">
    <property type="entry name" value="S1_EF-P_repeat_2"/>
    <property type="match status" value="1"/>
</dbReference>
<dbReference type="FunFam" id="2.30.30.30:FF:000003">
    <property type="entry name" value="Elongation factor P"/>
    <property type="match status" value="1"/>
</dbReference>
<dbReference type="FunFam" id="2.40.50.140:FF:000004">
    <property type="entry name" value="Elongation factor P"/>
    <property type="match status" value="1"/>
</dbReference>
<dbReference type="FunFam" id="2.40.50.140:FF:000009">
    <property type="entry name" value="Elongation factor P"/>
    <property type="match status" value="1"/>
</dbReference>
<dbReference type="Gene3D" id="2.30.30.30">
    <property type="match status" value="1"/>
</dbReference>
<dbReference type="Gene3D" id="2.40.50.140">
    <property type="entry name" value="Nucleic acid-binding proteins"/>
    <property type="match status" value="2"/>
</dbReference>
<dbReference type="HAMAP" id="MF_00141">
    <property type="entry name" value="EF_P"/>
    <property type="match status" value="1"/>
</dbReference>
<dbReference type="InterPro" id="IPR015365">
    <property type="entry name" value="Elong-fact-P_C"/>
</dbReference>
<dbReference type="InterPro" id="IPR012340">
    <property type="entry name" value="NA-bd_OB-fold"/>
</dbReference>
<dbReference type="InterPro" id="IPR014722">
    <property type="entry name" value="Rib_uL2_dom2"/>
</dbReference>
<dbReference type="InterPro" id="IPR020599">
    <property type="entry name" value="Transl_elong_fac_P/YeiP"/>
</dbReference>
<dbReference type="InterPro" id="IPR013185">
    <property type="entry name" value="Transl_elong_KOW-like"/>
</dbReference>
<dbReference type="InterPro" id="IPR001059">
    <property type="entry name" value="Transl_elong_P/YeiP_cen"/>
</dbReference>
<dbReference type="InterPro" id="IPR013852">
    <property type="entry name" value="Transl_elong_P/YeiP_CS"/>
</dbReference>
<dbReference type="InterPro" id="IPR011768">
    <property type="entry name" value="Transl_elongation_fac_P"/>
</dbReference>
<dbReference type="InterPro" id="IPR008991">
    <property type="entry name" value="Translation_prot_SH3-like_sf"/>
</dbReference>
<dbReference type="NCBIfam" id="TIGR00038">
    <property type="entry name" value="efp"/>
    <property type="match status" value="1"/>
</dbReference>
<dbReference type="NCBIfam" id="NF001810">
    <property type="entry name" value="PRK00529.1"/>
    <property type="match status" value="1"/>
</dbReference>
<dbReference type="PANTHER" id="PTHR30053">
    <property type="entry name" value="ELONGATION FACTOR P"/>
    <property type="match status" value="1"/>
</dbReference>
<dbReference type="PANTHER" id="PTHR30053:SF12">
    <property type="entry name" value="ELONGATION FACTOR P (EF-P) FAMILY PROTEIN"/>
    <property type="match status" value="1"/>
</dbReference>
<dbReference type="Pfam" id="PF01132">
    <property type="entry name" value="EFP"/>
    <property type="match status" value="1"/>
</dbReference>
<dbReference type="Pfam" id="PF08207">
    <property type="entry name" value="EFP_N"/>
    <property type="match status" value="1"/>
</dbReference>
<dbReference type="Pfam" id="PF09285">
    <property type="entry name" value="Elong-fact-P_C"/>
    <property type="match status" value="1"/>
</dbReference>
<dbReference type="PIRSF" id="PIRSF005901">
    <property type="entry name" value="EF-P"/>
    <property type="match status" value="1"/>
</dbReference>
<dbReference type="SMART" id="SM01185">
    <property type="entry name" value="EFP"/>
    <property type="match status" value="1"/>
</dbReference>
<dbReference type="SMART" id="SM00841">
    <property type="entry name" value="Elong-fact-P_C"/>
    <property type="match status" value="1"/>
</dbReference>
<dbReference type="SUPFAM" id="SSF50249">
    <property type="entry name" value="Nucleic acid-binding proteins"/>
    <property type="match status" value="2"/>
</dbReference>
<dbReference type="SUPFAM" id="SSF50104">
    <property type="entry name" value="Translation proteins SH3-like domain"/>
    <property type="match status" value="1"/>
</dbReference>
<dbReference type="PROSITE" id="PS01275">
    <property type="entry name" value="EFP"/>
    <property type="match status" value="1"/>
</dbReference>
<comment type="function">
    <text evidence="1">Involved in peptide bond synthesis. Alleviates ribosome stalling that occurs when 3 or more consecutive Pro residues or the sequence PPG is present in a protein, possibly by augmenting the peptidyl transferase activity of the ribosome. Modification of Lys-34 is required for alleviation.</text>
</comment>
<comment type="pathway">
    <text evidence="1">Protein biosynthesis; polypeptide chain elongation.</text>
</comment>
<comment type="subcellular location">
    <subcellularLocation>
        <location evidence="1">Cytoplasm</location>
    </subcellularLocation>
</comment>
<comment type="PTM">
    <text evidence="1">May be beta-lysylated on the epsilon-amino group of Lys-34 by the combined action of EpmA and EpmB, and then hydroxylated on the C5 position of the same residue by EpmC (if this protein is present). Lysylation is critical for the stimulatory effect of EF-P on peptide-bond formation. The lysylation moiety may extend toward the peptidyltransferase center and stabilize the terminal 3-CCA end of the tRNA. Hydroxylation of the C5 position on Lys-34 may allow additional potential stabilizing hydrogen-bond interactions with the P-tRNA.</text>
</comment>
<comment type="similarity">
    <text evidence="1">Belongs to the elongation factor P family.</text>
</comment>
<keyword id="KW-0963">Cytoplasm</keyword>
<keyword id="KW-0251">Elongation factor</keyword>
<keyword id="KW-0379">Hydroxylation</keyword>
<keyword id="KW-0648">Protein biosynthesis</keyword>
<gene>
    <name evidence="1" type="primary">efp</name>
    <name type="ordered locus">YPN_3316</name>
    <name type="ORF">YP516_3769</name>
</gene>
<name>EFP_YERPN</name>
<sequence>MASYYSNDFRPGLKIMFEGEPYAVESSEFVKPGKGQAFARVKMRRLLTGGRVEKTFKSTDSLEGADVNDMNLTYLYNDGEFWHFMNNETYEQLQADAKAVGDNGKWLIDQAECIVTLWNGQPIAVTPPNFVELEIVDTDPGLKGDTAGTGGKPATLSTGAVVKVPLFVQVGEIIKVDTRSGEYVSRVK</sequence>
<protein>
    <recommendedName>
        <fullName evidence="1">Elongation factor P</fullName>
        <shortName evidence="1">EF-P</shortName>
    </recommendedName>
</protein>
<evidence type="ECO:0000255" key="1">
    <source>
        <dbReference type="HAMAP-Rule" id="MF_00141"/>
    </source>
</evidence>
<feature type="chain" id="PRO_1000010904" description="Elongation factor P">
    <location>
        <begin position="1"/>
        <end position="188"/>
    </location>
</feature>
<feature type="modified residue" description="N6-(3,6-diaminohexanoyl)-5-hydroxylysine" evidence="1">
    <location>
        <position position="34"/>
    </location>
</feature>
<proteinExistence type="inferred from homology"/>
<organism>
    <name type="scientific">Yersinia pestis bv. Antiqua (strain Nepal516)</name>
    <dbReference type="NCBI Taxonomy" id="377628"/>
    <lineage>
        <taxon>Bacteria</taxon>
        <taxon>Pseudomonadati</taxon>
        <taxon>Pseudomonadota</taxon>
        <taxon>Gammaproteobacteria</taxon>
        <taxon>Enterobacterales</taxon>
        <taxon>Yersiniaceae</taxon>
        <taxon>Yersinia</taxon>
    </lineage>
</organism>
<reference key="1">
    <citation type="journal article" date="2006" name="J. Bacteriol.">
        <title>Complete genome sequence of Yersinia pestis strains Antiqua and Nepal516: evidence of gene reduction in an emerging pathogen.</title>
        <authorList>
            <person name="Chain P.S.G."/>
            <person name="Hu P."/>
            <person name="Malfatti S.A."/>
            <person name="Radnedge L."/>
            <person name="Larimer F."/>
            <person name="Vergez L.M."/>
            <person name="Worsham P."/>
            <person name="Chu M.C."/>
            <person name="Andersen G.L."/>
        </authorList>
    </citation>
    <scope>NUCLEOTIDE SEQUENCE [LARGE SCALE GENOMIC DNA]</scope>
    <source>
        <strain>Nepal516</strain>
    </source>
</reference>
<reference key="2">
    <citation type="submission" date="2009-04" db="EMBL/GenBank/DDBJ databases">
        <title>Yersinia pestis Nepal516A whole genome shotgun sequencing project.</title>
        <authorList>
            <person name="Plunkett G. III"/>
            <person name="Anderson B.D."/>
            <person name="Baumler D.J."/>
            <person name="Burland V."/>
            <person name="Cabot E.L."/>
            <person name="Glasner J.D."/>
            <person name="Mau B."/>
            <person name="Neeno-Eckwall E."/>
            <person name="Perna N.T."/>
            <person name="Munk A.C."/>
            <person name="Tapia R."/>
            <person name="Green L.D."/>
            <person name="Rogers Y.C."/>
            <person name="Detter J.C."/>
            <person name="Bruce D.C."/>
            <person name="Brettin T.S."/>
        </authorList>
    </citation>
    <scope>NUCLEOTIDE SEQUENCE [LARGE SCALE GENOMIC DNA]</scope>
    <source>
        <strain>Nepal516</strain>
    </source>
</reference>
<accession>Q1CED7</accession>
<accession>C4GY31</accession>